<gene>
    <name type="primary">PPP1CB</name>
</gene>
<proteinExistence type="evidence at transcript level"/>
<evidence type="ECO:0000250" key="1"/>
<evidence type="ECO:0000250" key="2">
    <source>
        <dbReference type="UniProtKB" id="P62140"/>
    </source>
</evidence>
<evidence type="ECO:0000250" key="3">
    <source>
        <dbReference type="UniProtKB" id="P62141"/>
    </source>
</evidence>
<evidence type="ECO:0000256" key="4">
    <source>
        <dbReference type="SAM" id="MobiDB-lite"/>
    </source>
</evidence>
<evidence type="ECO:0000305" key="5"/>
<name>PP1B_CANLF</name>
<feature type="initiator methionine" description="Removed" evidence="2">
    <location>
        <position position="1"/>
    </location>
</feature>
<feature type="chain" id="PRO_0000058778" description="Serine/threonine-protein phosphatase PP1-beta catalytic subunit">
    <location>
        <begin position="2"/>
        <end position="327"/>
    </location>
</feature>
<feature type="region of interest" description="Disordered" evidence="4">
    <location>
        <begin position="305"/>
        <end position="327"/>
    </location>
</feature>
<feature type="active site" description="Proton donor" evidence="1">
    <location>
        <position position="124"/>
    </location>
</feature>
<feature type="binding site" evidence="1">
    <location>
        <position position="63"/>
    </location>
    <ligand>
        <name>Mn(2+)</name>
        <dbReference type="ChEBI" id="CHEBI:29035"/>
        <label>1</label>
    </ligand>
</feature>
<feature type="binding site" evidence="1">
    <location>
        <position position="65"/>
    </location>
    <ligand>
        <name>Mn(2+)</name>
        <dbReference type="ChEBI" id="CHEBI:29035"/>
        <label>1</label>
    </ligand>
</feature>
<feature type="binding site" evidence="1">
    <location>
        <position position="91"/>
    </location>
    <ligand>
        <name>Mn(2+)</name>
        <dbReference type="ChEBI" id="CHEBI:29035"/>
        <label>1</label>
    </ligand>
</feature>
<feature type="binding site" evidence="1">
    <location>
        <position position="91"/>
    </location>
    <ligand>
        <name>Mn(2+)</name>
        <dbReference type="ChEBI" id="CHEBI:29035"/>
        <label>2</label>
    </ligand>
</feature>
<feature type="binding site" evidence="1">
    <location>
        <position position="123"/>
    </location>
    <ligand>
        <name>Mn(2+)</name>
        <dbReference type="ChEBI" id="CHEBI:29035"/>
        <label>2</label>
    </ligand>
</feature>
<feature type="binding site" evidence="1">
    <location>
        <position position="172"/>
    </location>
    <ligand>
        <name>Mn(2+)</name>
        <dbReference type="ChEBI" id="CHEBI:29035"/>
        <label>2</label>
    </ligand>
</feature>
<feature type="binding site" evidence="1">
    <location>
        <position position="247"/>
    </location>
    <ligand>
        <name>Mn(2+)</name>
        <dbReference type="ChEBI" id="CHEBI:29035"/>
        <label>2</label>
    </ligand>
</feature>
<feature type="modified residue" description="N-acetylalanine" evidence="2">
    <location>
        <position position="2"/>
    </location>
</feature>
<feature type="modified residue" description="Phosphothreonine" evidence="2">
    <location>
        <position position="316"/>
    </location>
</feature>
<feature type="sequence conflict" description="In Ref. 1; AAM88378." evidence="5" ref="1">
    <original>T</original>
    <variation>A</variation>
    <location>
        <position position="69"/>
    </location>
</feature>
<feature type="sequence conflict" description="In Ref. 1; AAM88380." evidence="5" ref="1">
    <original>A</original>
    <variation>V</variation>
    <location>
        <position position="246"/>
    </location>
</feature>
<feature type="sequence conflict" description="In Ref. 1; AAM88378." evidence="5" ref="1">
    <original>T</original>
    <variation>I</variation>
    <location>
        <position position="264"/>
    </location>
</feature>
<feature type="sequence conflict" description="In Ref. 1; AAM88380." evidence="5" ref="1">
    <original>Y</original>
    <variation>H</variation>
    <location>
        <position position="304"/>
    </location>
</feature>
<feature type="sequence conflict" description="In Ref. 1; AAM88380." evidence="5" ref="1">
    <original>P</original>
    <variation>S</variation>
    <location>
        <position position="318"/>
    </location>
</feature>
<feature type="sequence conflict" description="In Ref. 1; AAM88378." evidence="5" ref="1">
    <original>A</original>
    <variation>D</variation>
    <location>
        <position position="321"/>
    </location>
</feature>
<keyword id="KW-0007">Acetylation</keyword>
<keyword id="KW-0119">Carbohydrate metabolism</keyword>
<keyword id="KW-0131">Cell cycle</keyword>
<keyword id="KW-0132">Cell division</keyword>
<keyword id="KW-0963">Cytoplasm</keyword>
<keyword id="KW-0321">Glycogen metabolism</keyword>
<keyword id="KW-0378">Hydrolase</keyword>
<keyword id="KW-0464">Manganese</keyword>
<keyword id="KW-0479">Metal-binding</keyword>
<keyword id="KW-0539">Nucleus</keyword>
<keyword id="KW-0597">Phosphoprotein</keyword>
<keyword id="KW-0904">Protein phosphatase</keyword>
<keyword id="KW-1185">Reference proteome</keyword>
<sequence>MADGELNVDSLITRLLEVRGCRPGKIVQMTEAEVRGLCIKSREIFLSQPILLELEAPLKICGDIHGQYTDLLRLFEYGGFPPEANYLFLGDYVDRGKQSLETICLLLAYKIKYPENFFLLRGNHECASINRIYGFYDECKRRFNIKLWKTFTDCFNCLPIAAIVDEKIFCCHGGLSPDLQSMEQIRRIMRPTDVPDTGLLCDLLWSDPDKDVQGWGENDRGVSFTFGADVVSKFLNRHDLDLICRAHQVVEDGYEFFAKRQLVTLFSAPNYCGEFDNAGGMMSVDETLMCSFQILKPSEKKAKYQYGGLNSGRPVTPPRTANPPKKR</sequence>
<comment type="function">
    <text evidence="2">Protein phosphatase that associates with over 200 regulatory proteins to form highly specific holoenzymes which dephosphorylate hundreds of biological targets. Protein phosphatase (PP1) is essential for cell division, it participates in the regulation of glycogen metabolism, muscle contractility and protein synthesis. Involved in regulation of ionic conductances and long-term synaptic plasticity. Component of the PTW/PP1 phosphatase complex, which plays a role in the control of chromatin structure and cell cycle progression during the transition from mitosis into interphase (By similarity). Core component of the SHOC2-MRAS-PP1c (SMP) holophosphatase complex that regulates the MAPK pathway activation (By similarity). The SMP complex specifically dephosphorylates the inhibitory phosphorylation at 'Ser-259' of RAF1 kinase, 'Ser-365' of BRAF kinase and 'Ser-214' of ARAF kinase, stimulating their kinase activities (By similarity). The SMP complex enhances the dephosphorylation activity and substrate specificity of PP1c (By similarity).</text>
</comment>
<comment type="catalytic activity">
    <reaction evidence="2">
        <text>O-phospho-L-seryl-[protein] + H2O = L-seryl-[protein] + phosphate</text>
        <dbReference type="Rhea" id="RHEA:20629"/>
        <dbReference type="Rhea" id="RHEA-COMP:9863"/>
        <dbReference type="Rhea" id="RHEA-COMP:11604"/>
        <dbReference type="ChEBI" id="CHEBI:15377"/>
        <dbReference type="ChEBI" id="CHEBI:29999"/>
        <dbReference type="ChEBI" id="CHEBI:43474"/>
        <dbReference type="ChEBI" id="CHEBI:83421"/>
        <dbReference type="EC" id="3.1.3.16"/>
    </reaction>
</comment>
<comment type="catalytic activity">
    <reaction>
        <text>O-phospho-L-threonyl-[protein] + H2O = L-threonyl-[protein] + phosphate</text>
        <dbReference type="Rhea" id="RHEA:47004"/>
        <dbReference type="Rhea" id="RHEA-COMP:11060"/>
        <dbReference type="Rhea" id="RHEA-COMP:11605"/>
        <dbReference type="ChEBI" id="CHEBI:15377"/>
        <dbReference type="ChEBI" id="CHEBI:30013"/>
        <dbReference type="ChEBI" id="CHEBI:43474"/>
        <dbReference type="ChEBI" id="CHEBI:61977"/>
        <dbReference type="EC" id="3.1.3.16"/>
    </reaction>
</comment>
<comment type="catalytic activity">
    <reaction>
        <text>O-phospho-L-seryl-[myosin light chain] + H2O = L-seryl-[myosin light chain] + phosphate</text>
        <dbReference type="Rhea" id="RHEA:12849"/>
        <dbReference type="Rhea" id="RHEA-COMP:13684"/>
        <dbReference type="Rhea" id="RHEA-COMP:13685"/>
        <dbReference type="ChEBI" id="CHEBI:15377"/>
        <dbReference type="ChEBI" id="CHEBI:29999"/>
        <dbReference type="ChEBI" id="CHEBI:43474"/>
        <dbReference type="ChEBI" id="CHEBI:83421"/>
        <dbReference type="EC" id="3.1.3.53"/>
    </reaction>
</comment>
<comment type="catalytic activity">
    <reaction>
        <text>O-phospho-L-threonyl-[myosin light chain] + H2O = L-threonyl-[myosin light chain] + phosphate</text>
        <dbReference type="Rhea" id="RHEA:53988"/>
        <dbReference type="Rhea" id="RHEA-COMP:13686"/>
        <dbReference type="Rhea" id="RHEA-COMP:13687"/>
        <dbReference type="ChEBI" id="CHEBI:15377"/>
        <dbReference type="ChEBI" id="CHEBI:30013"/>
        <dbReference type="ChEBI" id="CHEBI:43474"/>
        <dbReference type="ChEBI" id="CHEBI:61977"/>
        <dbReference type="EC" id="3.1.3.53"/>
    </reaction>
</comment>
<comment type="cofactor">
    <cofactor evidence="1">
        <name>Mn(2+)</name>
        <dbReference type="ChEBI" id="CHEBI:29035"/>
    </cofactor>
    <text evidence="1">Binds 2 manganese ions per subunit.</text>
</comment>
<comment type="activity regulation">
    <text evidence="1">Inhibited by the toxins okadaic acid, tautomycin and microcystin Leu-Arg. The phosphatase activity of the PPP1R15A-PP1 complex toward EIF2S1 is specifically inhibited by Salubrinal, a drug that protects cells from endoplasmic reticulum stress (By similarity).</text>
</comment>
<comment type="subunit">
    <text evidence="2 3">PP1 comprises a catalytic subunit, PPP1CA, PPP1CB or PPP1CC, which is folded into its native form by inhibitor 2 and glycogen synthetase kinase 3, and then complexed to one or several targeting or regulatory subunits. The targeting or regulatory subunits determine the substrate specificity of PP1. PPP1R12A, PPP1R12B and PPP1R12C mediate binding to myosin. PPP1R3A (in skeletal muscle), PPP1R3B (in liver), PPP1R3C, PPP1R3D and PPP1R3F (in brain) mediate binding to glycogen. PPP1R15A and PPP1R15B mediate binding to EIF2S1. Part of a complex containing PPP1R15B, PP1 and NCK1/2. Interacts with PPP1R7 and PPP1R12C. Interacts with PPP1R16B. Component of the PTW/PP1 phosphatase complex, composed of PPP1R10/PNUTS, TOX4, WDR82, and PPP1CA or PPP1CB or PPP1CC. Interacts with PPP1R8. Interacts with PPP1R12A and NUAK1; the interaction is direct. Interacts with TRIM28; the interaction is weak. Interacts with FOXP3. Interacts with RRP1B. Interacts with SERPINE1. Interacts with LZTR1 (By similarity). Component of the SHOC2-MRAS-PP1c (SMP) complex consisting of SHOC2, GTP-bound M-Ras/MRAS and the catalytic subunit of protein phosphatase 1 (either PPP1CA, PPP1CB or PPP1CC) (By similarity). SHOC2 and PP1c preferably bind M-Ras/MRAS, but they also bind K-Ras/KRAS, N-Ras/NRAS and H-Ras/HRAS; these interactions are GTP-dependent and both SHOC2 and PP1c are required to form a stable complex (By similarity). Interacts with SHOC2 in the absence of Ras GTPases (By similarity).</text>
</comment>
<comment type="subcellular location">
    <subcellularLocation>
        <location evidence="2">Cytoplasm</location>
    </subcellularLocation>
    <subcellularLocation>
        <location evidence="2">Nucleus</location>
    </subcellularLocation>
    <subcellularLocation>
        <location evidence="2">Nucleus</location>
        <location evidence="2">Nucleoplasm</location>
    </subcellularLocation>
    <subcellularLocation>
        <location evidence="2">Nucleus</location>
        <location evidence="2">Nucleolus</location>
    </subcellularLocation>
    <text evidence="2">Highly mobile in cells and can be relocalized through interaction with targeting subunits. In the presence of PPP1R8 relocalizes from the nucleus to nuclear speckles.</text>
</comment>
<comment type="similarity">
    <text evidence="5">Belongs to the PPP phosphatase family. PP-1 subfamily.</text>
</comment>
<comment type="online information" name="Protein Spotlight">
    <link uri="https://www.proteinspotlight.org/back_issues/032"/>
    <text>The things we forget - Issue 32 of March 2003</text>
</comment>
<reference key="1">
    <citation type="submission" date="2002-06" db="EMBL/GenBank/DDBJ databases">
        <title>Cloning of protein phosphatase type 1 beta isoform from canine heart.</title>
        <authorList>
            <person name="Mishra S."/>
            <person name="Rastogi S."/>
            <person name="Tiwari N."/>
            <person name="Sabbah H.N."/>
            <person name="Gupta R.C."/>
        </authorList>
    </citation>
    <scope>NUCLEOTIDE SEQUENCE [MRNA]</scope>
    <source>
        <tissue>Heart</tissue>
    </source>
</reference>
<dbReference type="EC" id="3.1.3.16" evidence="2"/>
<dbReference type="EC" id="3.1.3.53"/>
<dbReference type="EMBL" id="AF525129">
    <property type="protein sequence ID" value="AAM88378.1"/>
    <property type="molecule type" value="mRNA"/>
</dbReference>
<dbReference type="EMBL" id="AF525131">
    <property type="protein sequence ID" value="AAM88380.1"/>
    <property type="molecule type" value="mRNA"/>
</dbReference>
<dbReference type="RefSeq" id="NP_001003034.1">
    <property type="nucleotide sequence ID" value="NM_001003034.1"/>
</dbReference>
<dbReference type="RefSeq" id="XP_038546357.1">
    <property type="nucleotide sequence ID" value="XM_038690429.1"/>
</dbReference>
<dbReference type="RefSeq" id="XP_038546358.1">
    <property type="nucleotide sequence ID" value="XM_038690430.1"/>
</dbReference>
<dbReference type="RefSeq" id="XP_038546359.1">
    <property type="nucleotide sequence ID" value="XM_038690431.1"/>
</dbReference>
<dbReference type="SMR" id="Q8MJ47"/>
<dbReference type="FunCoup" id="Q8MJ47">
    <property type="interactions" value="2392"/>
</dbReference>
<dbReference type="STRING" id="9615.ENSCAFP00000050877"/>
<dbReference type="PaxDb" id="9612-ENSCAFP00000007848"/>
<dbReference type="Ensembl" id="ENSCAFT00000094747.1">
    <property type="protein sequence ID" value="ENSCAFP00000070411.1"/>
    <property type="gene ID" value="ENSCAFG00000005238.5"/>
</dbReference>
<dbReference type="Ensembl" id="ENSCAFT00845018886.1">
    <property type="protein sequence ID" value="ENSCAFP00845014754.1"/>
    <property type="gene ID" value="ENSCAFG00845010629.1"/>
</dbReference>
<dbReference type="GeneID" id="403558"/>
<dbReference type="KEGG" id="cfa:403558"/>
<dbReference type="CTD" id="5500"/>
<dbReference type="VEuPathDB" id="HostDB:ENSCAFG00845010629"/>
<dbReference type="VGNC" id="VGNC:44875">
    <property type="gene designation" value="PPP1CB"/>
</dbReference>
<dbReference type="eggNOG" id="KOG0374">
    <property type="taxonomic scope" value="Eukaryota"/>
</dbReference>
<dbReference type="GeneTree" id="ENSGT00940000154644"/>
<dbReference type="InParanoid" id="Q8MJ47"/>
<dbReference type="OrthoDB" id="1930084at2759"/>
<dbReference type="Reactome" id="R-CFA-2565942">
    <property type="pathway name" value="Regulation of PLK1 Activity at G2/M Transition"/>
</dbReference>
<dbReference type="Reactome" id="R-CFA-5625740">
    <property type="pathway name" value="RHO GTPases activate PKNs"/>
</dbReference>
<dbReference type="Reactome" id="R-CFA-5627123">
    <property type="pathway name" value="RHO GTPases activate PAKs"/>
</dbReference>
<dbReference type="Proteomes" id="UP000002254">
    <property type="component" value="Chromosome 17"/>
</dbReference>
<dbReference type="Proteomes" id="UP000694429">
    <property type="component" value="Unplaced"/>
</dbReference>
<dbReference type="Proteomes" id="UP000694542">
    <property type="component" value="Unplaced"/>
</dbReference>
<dbReference type="Proteomes" id="UP000805418">
    <property type="component" value="Chromosome 17"/>
</dbReference>
<dbReference type="GO" id="GO:0005730">
    <property type="term" value="C:nucleolus"/>
    <property type="evidence" value="ECO:0007669"/>
    <property type="project" value="UniProtKB-SubCell"/>
</dbReference>
<dbReference type="GO" id="GO:0005654">
    <property type="term" value="C:nucleoplasm"/>
    <property type="evidence" value="ECO:0007669"/>
    <property type="project" value="UniProtKB-SubCell"/>
</dbReference>
<dbReference type="GO" id="GO:0072357">
    <property type="term" value="C:PTW/PP1 phosphatase complex"/>
    <property type="evidence" value="ECO:0000250"/>
    <property type="project" value="UniProtKB"/>
</dbReference>
<dbReference type="GO" id="GO:0046872">
    <property type="term" value="F:metal ion binding"/>
    <property type="evidence" value="ECO:0007669"/>
    <property type="project" value="UniProtKB-KW"/>
</dbReference>
<dbReference type="GO" id="GO:0017018">
    <property type="term" value="F:myosin phosphatase activity"/>
    <property type="evidence" value="ECO:0000250"/>
    <property type="project" value="UniProtKB"/>
</dbReference>
<dbReference type="GO" id="GO:0050115">
    <property type="term" value="F:myosin-light-chain-phosphatase activity"/>
    <property type="evidence" value="ECO:0000250"/>
    <property type="project" value="UniProtKB"/>
</dbReference>
<dbReference type="GO" id="GO:0051301">
    <property type="term" value="P:cell division"/>
    <property type="evidence" value="ECO:0007669"/>
    <property type="project" value="UniProtKB-KW"/>
</dbReference>
<dbReference type="GO" id="GO:0005977">
    <property type="term" value="P:glycogen metabolic process"/>
    <property type="evidence" value="ECO:0007669"/>
    <property type="project" value="UniProtKB-KW"/>
</dbReference>
<dbReference type="GO" id="GO:0030155">
    <property type="term" value="P:regulation of cell adhesion"/>
    <property type="evidence" value="ECO:0000250"/>
    <property type="project" value="UniProtKB"/>
</dbReference>
<dbReference type="CDD" id="cd07414">
    <property type="entry name" value="MPP_PP1_PPKL"/>
    <property type="match status" value="1"/>
</dbReference>
<dbReference type="FunFam" id="3.60.21.10:FF:000007">
    <property type="entry name" value="Serine/threonine-protein phosphatase"/>
    <property type="match status" value="1"/>
</dbReference>
<dbReference type="Gene3D" id="3.60.21.10">
    <property type="match status" value="1"/>
</dbReference>
<dbReference type="InterPro" id="IPR004843">
    <property type="entry name" value="Calcineurin-like_PHP_ApaH"/>
</dbReference>
<dbReference type="InterPro" id="IPR029052">
    <property type="entry name" value="Metallo-depent_PP-like"/>
</dbReference>
<dbReference type="InterPro" id="IPR050341">
    <property type="entry name" value="PP1_catalytic_subunit"/>
</dbReference>
<dbReference type="InterPro" id="IPR006186">
    <property type="entry name" value="Ser/Thr-sp_prot-phosphatase"/>
</dbReference>
<dbReference type="InterPro" id="IPR031675">
    <property type="entry name" value="STPPase_N"/>
</dbReference>
<dbReference type="PANTHER" id="PTHR11668">
    <property type="entry name" value="SERINE/THREONINE PROTEIN PHOSPHATASE"/>
    <property type="match status" value="1"/>
</dbReference>
<dbReference type="PANTHER" id="PTHR11668:SF472">
    <property type="entry name" value="SERINE_THREONINE-PROTEIN PHOSPHATASE PP1-BETA CATALYTIC SUBUNIT"/>
    <property type="match status" value="1"/>
</dbReference>
<dbReference type="Pfam" id="PF00149">
    <property type="entry name" value="Metallophos"/>
    <property type="match status" value="1"/>
</dbReference>
<dbReference type="Pfam" id="PF16891">
    <property type="entry name" value="STPPase_N"/>
    <property type="match status" value="1"/>
</dbReference>
<dbReference type="PRINTS" id="PR00114">
    <property type="entry name" value="STPHPHTASE"/>
</dbReference>
<dbReference type="SMART" id="SM00156">
    <property type="entry name" value="PP2Ac"/>
    <property type="match status" value="1"/>
</dbReference>
<dbReference type="SUPFAM" id="SSF56300">
    <property type="entry name" value="Metallo-dependent phosphatases"/>
    <property type="match status" value="1"/>
</dbReference>
<dbReference type="PROSITE" id="PS00125">
    <property type="entry name" value="SER_THR_PHOSPHATASE"/>
    <property type="match status" value="1"/>
</dbReference>
<accession>Q8MJ47</accession>
<accession>Q8MJ45</accession>
<protein>
    <recommendedName>
        <fullName>Serine/threonine-protein phosphatase PP1-beta catalytic subunit</fullName>
        <shortName>PP-1B</shortName>
        <ecNumber evidence="2">3.1.3.16</ecNumber>
        <ecNumber>3.1.3.53</ecNumber>
    </recommendedName>
</protein>
<organism>
    <name type="scientific">Canis lupus familiaris</name>
    <name type="common">Dog</name>
    <name type="synonym">Canis familiaris</name>
    <dbReference type="NCBI Taxonomy" id="9615"/>
    <lineage>
        <taxon>Eukaryota</taxon>
        <taxon>Metazoa</taxon>
        <taxon>Chordata</taxon>
        <taxon>Craniata</taxon>
        <taxon>Vertebrata</taxon>
        <taxon>Euteleostomi</taxon>
        <taxon>Mammalia</taxon>
        <taxon>Eutheria</taxon>
        <taxon>Laurasiatheria</taxon>
        <taxon>Carnivora</taxon>
        <taxon>Caniformia</taxon>
        <taxon>Canidae</taxon>
        <taxon>Canis</taxon>
    </lineage>
</organism>